<dbReference type="EMBL" id="AE016816">
    <property type="protein sequence ID" value="AAS51116.1"/>
    <property type="molecule type" value="Genomic_DNA"/>
</dbReference>
<dbReference type="RefSeq" id="NP_983292.1">
    <property type="nucleotide sequence ID" value="NM_208645.1"/>
</dbReference>
<dbReference type="SMR" id="Q75CN1"/>
<dbReference type="FunCoup" id="Q75CN1">
    <property type="interactions" value="1246"/>
</dbReference>
<dbReference type="STRING" id="284811.Q75CN1"/>
<dbReference type="EnsemblFungi" id="AAS51116">
    <property type="protein sequence ID" value="AAS51116"/>
    <property type="gene ID" value="AGOS_ACL112C"/>
</dbReference>
<dbReference type="GeneID" id="4619412"/>
<dbReference type="KEGG" id="ago:AGOS_ACL112C"/>
<dbReference type="eggNOG" id="KOG3239">
    <property type="taxonomic scope" value="Eukaryota"/>
</dbReference>
<dbReference type="HOGENOM" id="CLU_073511_0_1_1"/>
<dbReference type="InParanoid" id="Q75CN1"/>
<dbReference type="OMA" id="EVFEIDM"/>
<dbReference type="OrthoDB" id="277199at2759"/>
<dbReference type="Proteomes" id="UP000000591">
    <property type="component" value="Chromosome III"/>
</dbReference>
<dbReference type="GO" id="GO:0005737">
    <property type="term" value="C:cytoplasm"/>
    <property type="evidence" value="ECO:0007669"/>
    <property type="project" value="UniProtKB-SubCell"/>
</dbReference>
<dbReference type="GO" id="GO:1990904">
    <property type="term" value="C:ribonucleoprotein complex"/>
    <property type="evidence" value="ECO:0007669"/>
    <property type="project" value="UniProtKB-KW"/>
</dbReference>
<dbReference type="GO" id="GO:0005840">
    <property type="term" value="C:ribosome"/>
    <property type="evidence" value="ECO:0007669"/>
    <property type="project" value="UniProtKB-KW"/>
</dbReference>
<dbReference type="GO" id="GO:0003743">
    <property type="term" value="F:translation initiation factor activity"/>
    <property type="evidence" value="ECO:0007669"/>
    <property type="project" value="InterPro"/>
</dbReference>
<dbReference type="GO" id="GO:0001731">
    <property type="term" value="P:formation of translation preinitiation complex"/>
    <property type="evidence" value="ECO:0000318"/>
    <property type="project" value="GO_Central"/>
</dbReference>
<dbReference type="GO" id="GO:0000184">
    <property type="term" value="P:nuclear-transcribed mRNA catabolic process, nonsense-mediated decay"/>
    <property type="evidence" value="ECO:0007669"/>
    <property type="project" value="EnsemblFungi"/>
</dbReference>
<dbReference type="GO" id="GO:0032790">
    <property type="term" value="P:ribosome disassembly"/>
    <property type="evidence" value="ECO:0007669"/>
    <property type="project" value="EnsemblFungi"/>
</dbReference>
<dbReference type="GO" id="GO:0002188">
    <property type="term" value="P:translation reinitiation"/>
    <property type="evidence" value="ECO:0000318"/>
    <property type="project" value="GO_Central"/>
</dbReference>
<dbReference type="CDD" id="cd11607">
    <property type="entry name" value="DENR_C"/>
    <property type="match status" value="1"/>
</dbReference>
<dbReference type="FunFam" id="3.30.780.10:FF:000013">
    <property type="entry name" value="Translation machinery-associated protein 22"/>
    <property type="match status" value="1"/>
</dbReference>
<dbReference type="Gene3D" id="3.30.780.10">
    <property type="entry name" value="SUI1-like domain"/>
    <property type="match status" value="1"/>
</dbReference>
<dbReference type="InterPro" id="IPR050318">
    <property type="entry name" value="DENR/SUI1_TIF"/>
</dbReference>
<dbReference type="InterPro" id="IPR046447">
    <property type="entry name" value="DENR_C"/>
</dbReference>
<dbReference type="InterPro" id="IPR005873">
    <property type="entry name" value="DENR_eukaryotes"/>
</dbReference>
<dbReference type="InterPro" id="IPR048517">
    <property type="entry name" value="DENR_N"/>
</dbReference>
<dbReference type="InterPro" id="IPR001950">
    <property type="entry name" value="SUI1"/>
</dbReference>
<dbReference type="InterPro" id="IPR036877">
    <property type="entry name" value="SUI1_dom_sf"/>
</dbReference>
<dbReference type="NCBIfam" id="TIGR01159">
    <property type="entry name" value="DRP1"/>
    <property type="match status" value="1"/>
</dbReference>
<dbReference type="PANTHER" id="PTHR12789:SF0">
    <property type="entry name" value="DENSITY-REGULATED PROTEIN"/>
    <property type="match status" value="1"/>
</dbReference>
<dbReference type="PANTHER" id="PTHR12789">
    <property type="entry name" value="DENSITY-REGULATED PROTEIN HOMOLOG"/>
    <property type="match status" value="1"/>
</dbReference>
<dbReference type="Pfam" id="PF21023">
    <property type="entry name" value="DENR_N"/>
    <property type="match status" value="1"/>
</dbReference>
<dbReference type="Pfam" id="PF01253">
    <property type="entry name" value="SUI1"/>
    <property type="match status" value="1"/>
</dbReference>
<dbReference type="SUPFAM" id="SSF55159">
    <property type="entry name" value="eIF1-like"/>
    <property type="match status" value="1"/>
</dbReference>
<dbReference type="PROSITE" id="PS50296">
    <property type="entry name" value="SUI1"/>
    <property type="match status" value="1"/>
</dbReference>
<protein>
    <recommendedName>
        <fullName>Translation machinery-associated protein 22</fullName>
    </recommendedName>
</protein>
<organism>
    <name type="scientific">Eremothecium gossypii (strain ATCC 10895 / CBS 109.51 / FGSC 9923 / NRRL Y-1056)</name>
    <name type="common">Yeast</name>
    <name type="synonym">Ashbya gossypii</name>
    <dbReference type="NCBI Taxonomy" id="284811"/>
    <lineage>
        <taxon>Eukaryota</taxon>
        <taxon>Fungi</taxon>
        <taxon>Dikarya</taxon>
        <taxon>Ascomycota</taxon>
        <taxon>Saccharomycotina</taxon>
        <taxon>Saccharomycetes</taxon>
        <taxon>Saccharomycetales</taxon>
        <taxon>Saccharomycetaceae</taxon>
        <taxon>Eremothecium</taxon>
    </lineage>
</organism>
<reference key="1">
    <citation type="journal article" date="2004" name="Science">
        <title>The Ashbya gossypii genome as a tool for mapping the ancient Saccharomyces cerevisiae genome.</title>
        <authorList>
            <person name="Dietrich F.S."/>
            <person name="Voegeli S."/>
            <person name="Brachat S."/>
            <person name="Lerch A."/>
            <person name="Gates K."/>
            <person name="Steiner S."/>
            <person name="Mohr C."/>
            <person name="Poehlmann R."/>
            <person name="Luedi P."/>
            <person name="Choi S."/>
            <person name="Wing R.A."/>
            <person name="Flavier A."/>
            <person name="Gaffney T.D."/>
            <person name="Philippsen P."/>
        </authorList>
    </citation>
    <scope>NUCLEOTIDE SEQUENCE [LARGE SCALE GENOMIC DNA]</scope>
    <source>
        <strain>ATCC 10895 / CBS 109.51 / FGSC 9923 / NRRL Y-1056</strain>
    </source>
</reference>
<reference key="2">
    <citation type="journal article" date="2013" name="G3 (Bethesda)">
        <title>Genomes of Ashbya fungi isolated from insects reveal four mating-type loci, numerous translocations, lack of transposons, and distinct gene duplications.</title>
        <authorList>
            <person name="Dietrich F.S."/>
            <person name="Voegeli S."/>
            <person name="Kuo S."/>
            <person name="Philippsen P."/>
        </authorList>
    </citation>
    <scope>GENOME REANNOTATION</scope>
    <source>
        <strain>ATCC 10895 / CBS 109.51 / FGSC 9923 / NRRL Y-1056</strain>
    </source>
</reference>
<feature type="chain" id="PRO_0000320432" description="Translation machinery-associated protein 22">
    <location>
        <begin position="1"/>
        <end position="199"/>
    </location>
</feature>
<feature type="domain" description="SUI1" evidence="2">
    <location>
        <begin position="97"/>
        <end position="168"/>
    </location>
</feature>
<proteinExistence type="inferred from homology"/>
<sequence>MLKKVVYCGVCSLPPEYCEFTGKIRRCKVWLHEHDQELFAQLYGDDKEDVDGVAARLGQSSIGEEREEQLEKKLQKLQAREESKEQRELARKLSSRVVIRREARTKRKCMVVVAGLEVFEIDMKKLAKTFASKFATGCSVSKNVEKKEEVVVQGDIADEVEAYIHALLEEKGMKGVKVEQIDAAKKKKKTPTTTTPPPS</sequence>
<accession>Q75CN1</accession>
<gene>
    <name type="primary">TMA22</name>
    <name type="ordered locus">ACL112C</name>
</gene>
<comment type="subunit">
    <text evidence="1">Interacts with the 40S ribosomal subunit.</text>
</comment>
<comment type="subcellular location">
    <subcellularLocation>
        <location evidence="1">Cytoplasm</location>
    </subcellularLocation>
</comment>
<comment type="domain">
    <text>The SUI1 domain may be involved in RNA binding.</text>
</comment>
<comment type="similarity">
    <text evidence="3">Belongs to the DENR family.</text>
</comment>
<keyword id="KW-0963">Cytoplasm</keyword>
<keyword id="KW-1185">Reference proteome</keyword>
<keyword id="KW-0687">Ribonucleoprotein</keyword>
<keyword id="KW-0689">Ribosomal protein</keyword>
<name>DENR_EREGS</name>
<evidence type="ECO:0000250" key="1"/>
<evidence type="ECO:0000255" key="2">
    <source>
        <dbReference type="PROSITE-ProRule" id="PRU00200"/>
    </source>
</evidence>
<evidence type="ECO:0000305" key="3"/>